<evidence type="ECO:0000250" key="1"/>
<evidence type="ECO:0000255" key="2"/>
<evidence type="ECO:0000269" key="3">
    <source>
    </source>
</evidence>
<evidence type="ECO:0000269" key="4">
    <source>
    </source>
</evidence>
<evidence type="ECO:0000305" key="5"/>
<keyword id="KW-0150">Chloroplast</keyword>
<keyword id="KW-0472">Membrane</keyword>
<keyword id="KW-0520">NAD</keyword>
<keyword id="KW-0521">NADP</keyword>
<keyword id="KW-0934">Plastid</keyword>
<keyword id="KW-0618">Plastoquinone</keyword>
<keyword id="KW-0874">Quinone</keyword>
<keyword id="KW-0691">RNA editing</keyword>
<keyword id="KW-0793">Thylakoid</keyword>
<keyword id="KW-1278">Translocase</keyword>
<keyword id="KW-0812">Transmembrane</keyword>
<keyword id="KW-1133">Transmembrane helix</keyword>
<keyword id="KW-0813">Transport</keyword>
<sequence>MQLIYQCAWIVPLCPLISSILIGLGLLFFEKSTKSIRRICAISCILSLSVATVICYNLSYEQIIDNSIYQYSWSWISNGDIVLEFGYLIDPLTCIMLVLVTSVAIIVMIYSDGYMSHDEGYVRFFVYLSLFTASMLGLVLSPNLIQIYIFWELVGMCSYLLIGFWFTRPSAANACQKAFITNRIGDFGLLLGILGFYWITGSFEFENLFKGFKDLLINNEVSPFFAILCASFLFLGPVAKSAQFPLHVWLPDAMEGPTPISALIHAATMVAAGIYLVARMFPLFETLPFVMSVISWTGAVTALLGATLAFFQKDLKRGLAYSTMSQLGYMMLALGIGSYRAGLFHLITHAYSKALLFLGSGSVIHSMEPIVGYRPDESQNMIFMGGLRKHMPITGTTFLLGTLSLCGIPPFACFWSKDEIIADSWLYSPFIGWIALLTAGLTSFYMFRIYFLTFEGEFRANSFKENTPVSSVSLWGEFRFEEFGEKKADSVLQIVEKSSPKEFFRFVQSNRESSETQIGNYLSAYPSKEPIHFLYPKESDYTMLIPLLILSIPTLLIGFIGAPLPNGQLGSDLLSHWLNSFGNLSPERLSENWLEFIEDAITSISIASFGIFSAFILYGPASIFPRDLEKKIEPQLKGVWGFFINYMYNWSQYRGYIDQYYNKIFVEGTRILAYASSFFDRWIIDGIVNGTGISSFSGGEGMRYGEGGRVSSYLFGLVFGMTILLAVILLII</sequence>
<feature type="chain" id="PRO_0000118168" description="NAD(P)H-quinone oxidoreductase subunit 5, chloroplastic">
    <location>
        <begin position="1"/>
        <end position="732"/>
    </location>
</feature>
<feature type="transmembrane region" description="Helical" evidence="2">
    <location>
        <begin position="9"/>
        <end position="29"/>
    </location>
</feature>
<feature type="transmembrane region" description="Helical" evidence="2">
    <location>
        <begin position="39"/>
        <end position="59"/>
    </location>
</feature>
<feature type="transmembrane region" description="Helical" evidence="2">
    <location>
        <begin position="89"/>
        <end position="109"/>
    </location>
</feature>
<feature type="transmembrane region" description="Helical" evidence="2">
    <location>
        <begin position="125"/>
        <end position="145"/>
    </location>
</feature>
<feature type="transmembrane region" description="Helical" evidence="2">
    <location>
        <begin position="147"/>
        <end position="167"/>
    </location>
</feature>
<feature type="transmembrane region" description="Helical" evidence="2">
    <location>
        <begin position="184"/>
        <end position="204"/>
    </location>
</feature>
<feature type="transmembrane region" description="Helical" evidence="2">
    <location>
        <begin position="215"/>
        <end position="235"/>
    </location>
</feature>
<feature type="transmembrane region" description="Helical" evidence="2">
    <location>
        <begin position="258"/>
        <end position="278"/>
    </location>
</feature>
<feature type="transmembrane region" description="Helical" evidence="2">
    <location>
        <begin position="291"/>
        <end position="311"/>
    </location>
</feature>
<feature type="transmembrane region" description="Helical" evidence="2">
    <location>
        <begin position="327"/>
        <end position="347"/>
    </location>
</feature>
<feature type="transmembrane region" description="Helical" evidence="2">
    <location>
        <begin position="353"/>
        <end position="373"/>
    </location>
</feature>
<feature type="transmembrane region" description="Helical" evidence="2">
    <location>
        <begin position="395"/>
        <end position="415"/>
    </location>
</feature>
<feature type="transmembrane region" description="Helical" evidence="2">
    <location>
        <begin position="420"/>
        <end position="440"/>
    </location>
</feature>
<feature type="transmembrane region" description="Helical" evidence="2">
    <location>
        <begin position="544"/>
        <end position="564"/>
    </location>
</feature>
<feature type="transmembrane region" description="Helical" evidence="2">
    <location>
        <begin position="604"/>
        <end position="624"/>
    </location>
</feature>
<feature type="transmembrane region" description="Helical" evidence="2">
    <location>
        <begin position="712"/>
        <end position="732"/>
    </location>
</feature>
<organism>
    <name type="scientific">Anthoceros angustus</name>
    <name type="common">Hornwort</name>
    <name type="synonym">Anthoceros formosae</name>
    <dbReference type="NCBI Taxonomy" id="48387"/>
    <lineage>
        <taxon>Eukaryota</taxon>
        <taxon>Viridiplantae</taxon>
        <taxon>Streptophyta</taxon>
        <taxon>Embryophyta</taxon>
        <taxon>Anthocerotophyta</taxon>
        <taxon>Anthocerotopsida</taxon>
        <taxon>Anthocerotidae</taxon>
        <taxon>Anthocerotales</taxon>
        <taxon>Anthocerotaceae</taxon>
        <taxon>Anthoceros</taxon>
    </lineage>
</organism>
<protein>
    <recommendedName>
        <fullName>NAD(P)H-quinone oxidoreductase subunit 5, chloroplastic</fullName>
        <ecNumber>7.1.1.-</ecNumber>
    </recommendedName>
    <alternativeName>
        <fullName>NAD(P)H dehydrogenase subunit 5</fullName>
    </alternativeName>
    <alternativeName>
        <fullName>NADH-plastoquinone oxidoreductase subunit 5</fullName>
    </alternativeName>
</protein>
<geneLocation type="chloroplast"/>
<proteinExistence type="evidence at transcript level"/>
<gene>
    <name type="primary">ndhF</name>
</gene>
<name>NU5C_ANTAG</name>
<reference key="1">
    <citation type="journal article" date="2003" name="Nucleic Acids Res.">
        <title>The complete nucleotide sequence of the hornwort (Anthoceros formosae) chloroplast genome: insight into the earliest land plants.</title>
        <authorList>
            <person name="Kugita M."/>
            <person name="Kaneko A."/>
            <person name="Yamamoto Y."/>
            <person name="Takeya Y."/>
            <person name="Matsumoto T."/>
            <person name="Yoshinaga K."/>
        </authorList>
    </citation>
    <scope>NUCLEOTIDE SEQUENCE [LARGE SCALE GENOMIC DNA]</scope>
    <scope>RNA EDITING</scope>
</reference>
<reference key="2">
    <citation type="journal article" date="2003" name="Nucleic Acids Res.">
        <title>RNA editing in hornwort chloroplasts makes more than half the genes functional.</title>
        <authorList>
            <person name="Kugita M."/>
            <person name="Yamamoto Y."/>
            <person name="Fujikawa T."/>
            <person name="Matsumoto T."/>
            <person name="Yoshinaga K."/>
        </authorList>
    </citation>
    <scope>NUCLEOTIDE SEQUENCE [MRNA]</scope>
    <scope>RNA EDITING</scope>
    <source>
        <tissue>Thallus</tissue>
    </source>
</reference>
<dbReference type="EC" id="7.1.1.-"/>
<dbReference type="EMBL" id="AB086179">
    <property type="protein sequence ID" value="BAC55396.1"/>
    <property type="molecule type" value="Genomic_DNA"/>
</dbReference>
<dbReference type="EMBL" id="AB087481">
    <property type="protein sequence ID" value="BAC55496.1"/>
    <property type="molecule type" value="mRNA"/>
</dbReference>
<dbReference type="RefSeq" id="NP_777459.1">
    <property type="nucleotide sequence ID" value="NC_004543.1"/>
</dbReference>
<dbReference type="SMR" id="Q859V1"/>
<dbReference type="GeneID" id="2553499"/>
<dbReference type="GO" id="GO:0009535">
    <property type="term" value="C:chloroplast thylakoid membrane"/>
    <property type="evidence" value="ECO:0007669"/>
    <property type="project" value="UniProtKB-SubCell"/>
</dbReference>
<dbReference type="GO" id="GO:0008137">
    <property type="term" value="F:NADH dehydrogenase (ubiquinone) activity"/>
    <property type="evidence" value="ECO:0007669"/>
    <property type="project" value="InterPro"/>
</dbReference>
<dbReference type="GO" id="GO:0048038">
    <property type="term" value="F:quinone binding"/>
    <property type="evidence" value="ECO:0007669"/>
    <property type="project" value="UniProtKB-KW"/>
</dbReference>
<dbReference type="GO" id="GO:0042773">
    <property type="term" value="P:ATP synthesis coupled electron transport"/>
    <property type="evidence" value="ECO:0007669"/>
    <property type="project" value="InterPro"/>
</dbReference>
<dbReference type="GO" id="GO:0015990">
    <property type="term" value="P:electron transport coupled proton transport"/>
    <property type="evidence" value="ECO:0007669"/>
    <property type="project" value="TreeGrafter"/>
</dbReference>
<dbReference type="Gene3D" id="1.20.5.2700">
    <property type="match status" value="1"/>
</dbReference>
<dbReference type="InterPro" id="IPR002128">
    <property type="entry name" value="NADH_UbQ_OxRdtase_chlpt_su5_C"/>
</dbReference>
<dbReference type="InterPro" id="IPR018393">
    <property type="entry name" value="NADHpl_OxRdtase_5_subgr"/>
</dbReference>
<dbReference type="InterPro" id="IPR001750">
    <property type="entry name" value="ND/Mrp_TM"/>
</dbReference>
<dbReference type="InterPro" id="IPR003945">
    <property type="entry name" value="NU5C-like"/>
</dbReference>
<dbReference type="InterPro" id="IPR001516">
    <property type="entry name" value="Proton_antipo_N"/>
</dbReference>
<dbReference type="NCBIfam" id="TIGR01974">
    <property type="entry name" value="NDH_I_L"/>
    <property type="match status" value="1"/>
</dbReference>
<dbReference type="NCBIfam" id="NF005141">
    <property type="entry name" value="PRK06590.1"/>
    <property type="match status" value="1"/>
</dbReference>
<dbReference type="PANTHER" id="PTHR42829">
    <property type="entry name" value="NADH-UBIQUINONE OXIDOREDUCTASE CHAIN 5"/>
    <property type="match status" value="1"/>
</dbReference>
<dbReference type="PANTHER" id="PTHR42829:SF2">
    <property type="entry name" value="NADH-UBIQUINONE OXIDOREDUCTASE CHAIN 5"/>
    <property type="match status" value="1"/>
</dbReference>
<dbReference type="Pfam" id="PF01010">
    <property type="entry name" value="Proton_antipo_C"/>
    <property type="match status" value="1"/>
</dbReference>
<dbReference type="Pfam" id="PF00361">
    <property type="entry name" value="Proton_antipo_M"/>
    <property type="match status" value="1"/>
</dbReference>
<dbReference type="Pfam" id="PF00662">
    <property type="entry name" value="Proton_antipo_N"/>
    <property type="match status" value="1"/>
</dbReference>
<dbReference type="PRINTS" id="PR01434">
    <property type="entry name" value="NADHDHGNASE5"/>
</dbReference>
<dbReference type="PRINTS" id="PR01435">
    <property type="entry name" value="NPOXDRDTASE5"/>
</dbReference>
<comment type="function">
    <text evidence="1">NDH shuttles electrons from NAD(P)H:plastoquinone, via FMN and iron-sulfur (Fe-S) centers, to quinones in the photosynthetic chain and possibly in a chloroplast respiratory chain. The immediate electron acceptor for the enzyme in this species is believed to be plastoquinone. Couples the redox reaction to proton translocation, and thus conserves the redox energy in a proton gradient (By similarity).</text>
</comment>
<comment type="catalytic activity">
    <reaction>
        <text>a plastoquinone + NADH + (n+1) H(+)(in) = a plastoquinol + NAD(+) + n H(+)(out)</text>
        <dbReference type="Rhea" id="RHEA:42608"/>
        <dbReference type="Rhea" id="RHEA-COMP:9561"/>
        <dbReference type="Rhea" id="RHEA-COMP:9562"/>
        <dbReference type="ChEBI" id="CHEBI:15378"/>
        <dbReference type="ChEBI" id="CHEBI:17757"/>
        <dbReference type="ChEBI" id="CHEBI:57540"/>
        <dbReference type="ChEBI" id="CHEBI:57945"/>
        <dbReference type="ChEBI" id="CHEBI:62192"/>
    </reaction>
</comment>
<comment type="catalytic activity">
    <reaction>
        <text>a plastoquinone + NADPH + (n+1) H(+)(in) = a plastoquinol + NADP(+) + n H(+)(out)</text>
        <dbReference type="Rhea" id="RHEA:42612"/>
        <dbReference type="Rhea" id="RHEA-COMP:9561"/>
        <dbReference type="Rhea" id="RHEA-COMP:9562"/>
        <dbReference type="ChEBI" id="CHEBI:15378"/>
        <dbReference type="ChEBI" id="CHEBI:17757"/>
        <dbReference type="ChEBI" id="CHEBI:57783"/>
        <dbReference type="ChEBI" id="CHEBI:58349"/>
        <dbReference type="ChEBI" id="CHEBI:62192"/>
    </reaction>
</comment>
<comment type="subunit">
    <text evidence="1">NDH is composed of at least 16 different subunits, 5 of which are encoded in the nucleus.</text>
</comment>
<comment type="subcellular location">
    <subcellularLocation>
        <location evidence="1">Plastid</location>
        <location evidence="1">Chloroplast thylakoid membrane</location>
        <topology evidence="1">Multi-pass membrane protein</topology>
    </subcellularLocation>
</comment>
<comment type="RNA editing">
    <location>
        <position position="27" evidence="3 4"/>
    </location>
    <location>
        <position position="46" evidence="3 4"/>
    </location>
    <location>
        <position position="70" evidence="3 4"/>
    </location>
    <location>
        <position position="75" evidence="3 4"/>
    </location>
    <location>
        <position position="83" evidence="3 4"/>
    </location>
    <location>
        <position position="91" evidence="3 4"/>
    </location>
    <location>
        <position position="125" evidence="3 4"/>
    </location>
    <location>
        <position position="128" evidence="3 4"/>
    </location>
    <location>
        <position position="183" evidence="3 4"/>
    </location>
    <location>
        <position position="194" evidence="3 4"/>
    </location>
    <location>
        <position position="209" evidence="3 4"/>
    </location>
    <location>
        <position position="223" evidence="3 4"/>
    </location>
    <location>
        <position position="259" evidence="3 4"/>
    </location>
    <location>
        <position position="282" evidence="3 4"/>
    </location>
    <location>
        <position position="291" evidence="3 4"/>
    </location>
    <location>
        <position position="303" evidence="3 4"/>
    </location>
    <location>
        <position position="311" evidence="3 4"/>
    </location>
    <location>
        <position position="322" evidence="3 4"/>
    </location>
    <location>
        <position position="334" evidence="3 4"/>
    </location>
    <location>
        <position position="344" evidence="3 4"/>
    </location>
    <location>
        <position position="346" evidence="3 4"/>
    </location>
    <location>
        <position position="355" evidence="3 4"/>
    </location>
    <location>
        <position position="366" evidence="3 4"/>
    </location>
    <location>
        <position position="374" evidence="3 4"/>
    </location>
    <location>
        <position position="379" evidence="3 4"/>
    </location>
    <location>
        <position position="399" evidence="3 4"/>
    </location>
    <location>
        <position position="403" evidence="3 4"/>
    </location>
    <location>
        <position position="410" evidence="3 4"/>
    </location>
    <location>
        <position position="427" evidence="3 4"/>
    </location>
    <location>
        <position position="445" evidence="3 4"/>
    </location>
    <location>
        <position position="463" evidence="3 4"/>
    </location>
    <location>
        <position position="492" evidence="3 4"/>
    </location>
    <location>
        <position position="550" evidence="3 4"/>
    </location>
    <location>
        <position position="634" evidence="3 4"/>
    </location>
    <text>The nonsense codons at positions 70 and 379 are modified to sense codons.</text>
</comment>
<comment type="similarity">
    <text evidence="5">Belongs to the complex I subunit 5 family.</text>
</comment>
<accession>Q859V1</accession>